<organism>
    <name type="scientific">Cereibacter sphaeroides (strain ATCC 17029 / ATH 2.4.9)</name>
    <name type="common">Rhodobacter sphaeroides</name>
    <dbReference type="NCBI Taxonomy" id="349101"/>
    <lineage>
        <taxon>Bacteria</taxon>
        <taxon>Pseudomonadati</taxon>
        <taxon>Pseudomonadota</taxon>
        <taxon>Alphaproteobacteria</taxon>
        <taxon>Rhodobacterales</taxon>
        <taxon>Paracoccaceae</taxon>
        <taxon>Cereibacter</taxon>
    </lineage>
</organism>
<evidence type="ECO:0000255" key="1">
    <source>
        <dbReference type="HAMAP-Rule" id="MF_00228"/>
    </source>
</evidence>
<keyword id="KW-0067">ATP-binding</keyword>
<keyword id="KW-0418">Kinase</keyword>
<keyword id="KW-0460">Magnesium</keyword>
<keyword id="KW-0479">Metal-binding</keyword>
<keyword id="KW-0547">Nucleotide-binding</keyword>
<keyword id="KW-0784">Thiamine biosynthesis</keyword>
<keyword id="KW-0808">Transferase</keyword>
<name>THIM_CERS1</name>
<gene>
    <name evidence="1" type="primary">thiM</name>
    <name type="ordered locus">Rsph17029_2302</name>
</gene>
<accession>A3PM38</accession>
<reference key="1">
    <citation type="submission" date="2007-02" db="EMBL/GenBank/DDBJ databases">
        <title>Complete sequence of chromosome 1 of Rhodobacter sphaeroides ATCC 17029.</title>
        <authorList>
            <person name="Copeland A."/>
            <person name="Lucas S."/>
            <person name="Lapidus A."/>
            <person name="Barry K."/>
            <person name="Detter J.C."/>
            <person name="Glavina del Rio T."/>
            <person name="Hammon N."/>
            <person name="Israni S."/>
            <person name="Dalin E."/>
            <person name="Tice H."/>
            <person name="Pitluck S."/>
            <person name="Kiss H."/>
            <person name="Brettin T."/>
            <person name="Bruce D."/>
            <person name="Han C."/>
            <person name="Tapia R."/>
            <person name="Gilna P."/>
            <person name="Schmutz J."/>
            <person name="Larimer F."/>
            <person name="Land M."/>
            <person name="Hauser L."/>
            <person name="Kyrpides N."/>
            <person name="Mikhailova N."/>
            <person name="Richardson P."/>
            <person name="Mackenzie C."/>
            <person name="Choudhary M."/>
            <person name="Donohue T.J."/>
            <person name="Kaplan S."/>
        </authorList>
    </citation>
    <scope>NUCLEOTIDE SEQUENCE [LARGE SCALE GENOMIC DNA]</scope>
    <source>
        <strain>ATCC 17029 / ATH 2.4.9</strain>
    </source>
</reference>
<comment type="function">
    <text evidence="1">Catalyzes the phosphorylation of the hydroxyl group of 4-methyl-5-beta-hydroxyethylthiazole (THZ).</text>
</comment>
<comment type="catalytic activity">
    <reaction evidence="1">
        <text>5-(2-hydroxyethyl)-4-methylthiazole + ATP = 4-methyl-5-(2-phosphooxyethyl)-thiazole + ADP + H(+)</text>
        <dbReference type="Rhea" id="RHEA:24212"/>
        <dbReference type="ChEBI" id="CHEBI:15378"/>
        <dbReference type="ChEBI" id="CHEBI:17957"/>
        <dbReference type="ChEBI" id="CHEBI:30616"/>
        <dbReference type="ChEBI" id="CHEBI:58296"/>
        <dbReference type="ChEBI" id="CHEBI:456216"/>
        <dbReference type="EC" id="2.7.1.50"/>
    </reaction>
</comment>
<comment type="cofactor">
    <cofactor evidence="1">
        <name>Mg(2+)</name>
        <dbReference type="ChEBI" id="CHEBI:18420"/>
    </cofactor>
</comment>
<comment type="pathway">
    <text evidence="1">Cofactor biosynthesis; thiamine diphosphate biosynthesis; 4-methyl-5-(2-phosphoethyl)-thiazole from 5-(2-hydroxyethyl)-4-methylthiazole: step 1/1.</text>
</comment>
<comment type="similarity">
    <text evidence="1">Belongs to the Thz kinase family.</text>
</comment>
<feature type="chain" id="PRO_0000336566" description="Hydroxyethylthiazole kinase">
    <location>
        <begin position="1"/>
        <end position="262"/>
    </location>
</feature>
<feature type="binding site" evidence="1">
    <location>
        <position position="43"/>
    </location>
    <ligand>
        <name>substrate</name>
    </ligand>
</feature>
<feature type="binding site" evidence="1">
    <location>
        <position position="118"/>
    </location>
    <ligand>
        <name>ATP</name>
        <dbReference type="ChEBI" id="CHEBI:30616"/>
    </ligand>
</feature>
<feature type="binding site" evidence="1">
    <location>
        <position position="164"/>
    </location>
    <ligand>
        <name>ATP</name>
        <dbReference type="ChEBI" id="CHEBI:30616"/>
    </ligand>
</feature>
<feature type="binding site" evidence="1">
    <location>
        <position position="191"/>
    </location>
    <ligand>
        <name>substrate</name>
    </ligand>
</feature>
<dbReference type="EC" id="2.7.1.50" evidence="1"/>
<dbReference type="EMBL" id="CP000577">
    <property type="protein sequence ID" value="ABN77404.1"/>
    <property type="molecule type" value="Genomic_DNA"/>
</dbReference>
<dbReference type="RefSeq" id="WP_011841584.1">
    <property type="nucleotide sequence ID" value="NC_009049.1"/>
</dbReference>
<dbReference type="SMR" id="A3PM38"/>
<dbReference type="KEGG" id="rsh:Rsph17029_2302"/>
<dbReference type="HOGENOM" id="CLU_019943_0_1_5"/>
<dbReference type="UniPathway" id="UPA00060">
    <property type="reaction ID" value="UER00139"/>
</dbReference>
<dbReference type="GO" id="GO:0005524">
    <property type="term" value="F:ATP binding"/>
    <property type="evidence" value="ECO:0007669"/>
    <property type="project" value="UniProtKB-UniRule"/>
</dbReference>
<dbReference type="GO" id="GO:0004417">
    <property type="term" value="F:hydroxyethylthiazole kinase activity"/>
    <property type="evidence" value="ECO:0007669"/>
    <property type="project" value="UniProtKB-UniRule"/>
</dbReference>
<dbReference type="GO" id="GO:0000287">
    <property type="term" value="F:magnesium ion binding"/>
    <property type="evidence" value="ECO:0007669"/>
    <property type="project" value="UniProtKB-UniRule"/>
</dbReference>
<dbReference type="GO" id="GO:0009228">
    <property type="term" value="P:thiamine biosynthetic process"/>
    <property type="evidence" value="ECO:0007669"/>
    <property type="project" value="UniProtKB-KW"/>
</dbReference>
<dbReference type="GO" id="GO:0009229">
    <property type="term" value="P:thiamine diphosphate biosynthetic process"/>
    <property type="evidence" value="ECO:0007669"/>
    <property type="project" value="UniProtKB-UniRule"/>
</dbReference>
<dbReference type="CDD" id="cd01170">
    <property type="entry name" value="THZ_kinase"/>
    <property type="match status" value="1"/>
</dbReference>
<dbReference type="Gene3D" id="3.40.1190.20">
    <property type="match status" value="1"/>
</dbReference>
<dbReference type="HAMAP" id="MF_00228">
    <property type="entry name" value="Thz_kinase"/>
    <property type="match status" value="1"/>
</dbReference>
<dbReference type="InterPro" id="IPR000417">
    <property type="entry name" value="Hyethyz_kinase"/>
</dbReference>
<dbReference type="InterPro" id="IPR029056">
    <property type="entry name" value="Ribokinase-like"/>
</dbReference>
<dbReference type="NCBIfam" id="NF006830">
    <property type="entry name" value="PRK09355.1"/>
    <property type="match status" value="1"/>
</dbReference>
<dbReference type="NCBIfam" id="TIGR00694">
    <property type="entry name" value="thiM"/>
    <property type="match status" value="1"/>
</dbReference>
<dbReference type="Pfam" id="PF02110">
    <property type="entry name" value="HK"/>
    <property type="match status" value="1"/>
</dbReference>
<dbReference type="PIRSF" id="PIRSF000513">
    <property type="entry name" value="Thz_kinase"/>
    <property type="match status" value="1"/>
</dbReference>
<dbReference type="PRINTS" id="PR01099">
    <property type="entry name" value="HYETHTZKNASE"/>
</dbReference>
<dbReference type="SUPFAM" id="SSF53613">
    <property type="entry name" value="Ribokinase-like"/>
    <property type="match status" value="1"/>
</dbReference>
<proteinExistence type="inferred from homology"/>
<sequence>MDGCGTYLDTMRREAPLVQCITNFVAMNVVANVLLAAGASPAMVHDAEESGEFAAIAQALTINMGTPSPRWVEGMEAAARGAAAAGRPWVLDPVAVGATAFRRGLGARLLALKPTVIRGNASEILALAGAETRGKGADSADPVAAAEAAAQRLAESSGAVVAVTGPVDFVTDGRRGIRCANGHPLMPRVTALGCSLTGIVGAFAAIRPPFEATAAALAFFGLAGEEAAKTATGPGSFQVAFLDALHALSPEALDRGARLEAA</sequence>
<protein>
    <recommendedName>
        <fullName evidence="1">Hydroxyethylthiazole kinase</fullName>
        <ecNumber evidence="1">2.7.1.50</ecNumber>
    </recommendedName>
    <alternativeName>
        <fullName evidence="1">4-methyl-5-beta-hydroxyethylthiazole kinase</fullName>
        <shortName evidence="1">TH kinase</shortName>
        <shortName evidence="1">Thz kinase</shortName>
    </alternativeName>
</protein>